<feature type="chain" id="PRO_1000139387" description="CTP synthase">
    <location>
        <begin position="1"/>
        <end position="542"/>
    </location>
</feature>
<feature type="domain" description="Glutamine amidotransferase type-1" evidence="1">
    <location>
        <begin position="291"/>
        <end position="541"/>
    </location>
</feature>
<feature type="region of interest" description="Amidoligase domain" evidence="1">
    <location>
        <begin position="1"/>
        <end position="265"/>
    </location>
</feature>
<feature type="active site" description="Nucleophile; for glutamine hydrolysis" evidence="1">
    <location>
        <position position="380"/>
    </location>
</feature>
<feature type="active site" evidence="1">
    <location>
        <position position="514"/>
    </location>
</feature>
<feature type="active site" evidence="1">
    <location>
        <position position="516"/>
    </location>
</feature>
<feature type="binding site" evidence="1">
    <location>
        <position position="13"/>
    </location>
    <ligand>
        <name>CTP</name>
        <dbReference type="ChEBI" id="CHEBI:37563"/>
        <note>allosteric inhibitor</note>
    </ligand>
</feature>
<feature type="binding site" evidence="1">
    <location>
        <position position="13"/>
    </location>
    <ligand>
        <name>UTP</name>
        <dbReference type="ChEBI" id="CHEBI:46398"/>
    </ligand>
</feature>
<feature type="binding site" evidence="1">
    <location>
        <begin position="14"/>
        <end position="19"/>
    </location>
    <ligand>
        <name>ATP</name>
        <dbReference type="ChEBI" id="CHEBI:30616"/>
    </ligand>
</feature>
<feature type="binding site" evidence="1">
    <location>
        <position position="54"/>
    </location>
    <ligand>
        <name>L-glutamine</name>
        <dbReference type="ChEBI" id="CHEBI:58359"/>
    </ligand>
</feature>
<feature type="binding site" evidence="1">
    <location>
        <position position="71"/>
    </location>
    <ligand>
        <name>ATP</name>
        <dbReference type="ChEBI" id="CHEBI:30616"/>
    </ligand>
</feature>
<feature type="binding site" evidence="1">
    <location>
        <position position="71"/>
    </location>
    <ligand>
        <name>Mg(2+)</name>
        <dbReference type="ChEBI" id="CHEBI:18420"/>
    </ligand>
</feature>
<feature type="binding site" evidence="1">
    <location>
        <position position="139"/>
    </location>
    <ligand>
        <name>Mg(2+)</name>
        <dbReference type="ChEBI" id="CHEBI:18420"/>
    </ligand>
</feature>
<feature type="binding site" evidence="1">
    <location>
        <begin position="146"/>
        <end position="148"/>
    </location>
    <ligand>
        <name>CTP</name>
        <dbReference type="ChEBI" id="CHEBI:37563"/>
        <note>allosteric inhibitor</note>
    </ligand>
</feature>
<feature type="binding site" evidence="1">
    <location>
        <begin position="186"/>
        <end position="191"/>
    </location>
    <ligand>
        <name>CTP</name>
        <dbReference type="ChEBI" id="CHEBI:37563"/>
        <note>allosteric inhibitor</note>
    </ligand>
</feature>
<feature type="binding site" evidence="1">
    <location>
        <begin position="186"/>
        <end position="191"/>
    </location>
    <ligand>
        <name>UTP</name>
        <dbReference type="ChEBI" id="CHEBI:46398"/>
    </ligand>
</feature>
<feature type="binding site" evidence="1">
    <location>
        <position position="222"/>
    </location>
    <ligand>
        <name>CTP</name>
        <dbReference type="ChEBI" id="CHEBI:37563"/>
        <note>allosteric inhibitor</note>
    </ligand>
</feature>
<feature type="binding site" evidence="1">
    <location>
        <position position="222"/>
    </location>
    <ligand>
        <name>UTP</name>
        <dbReference type="ChEBI" id="CHEBI:46398"/>
    </ligand>
</feature>
<feature type="binding site" evidence="1">
    <location>
        <position position="353"/>
    </location>
    <ligand>
        <name>L-glutamine</name>
        <dbReference type="ChEBI" id="CHEBI:58359"/>
    </ligand>
</feature>
<feature type="binding site" evidence="1">
    <location>
        <begin position="381"/>
        <end position="384"/>
    </location>
    <ligand>
        <name>L-glutamine</name>
        <dbReference type="ChEBI" id="CHEBI:58359"/>
    </ligand>
</feature>
<feature type="binding site" evidence="1">
    <location>
        <position position="404"/>
    </location>
    <ligand>
        <name>L-glutamine</name>
        <dbReference type="ChEBI" id="CHEBI:58359"/>
    </ligand>
</feature>
<feature type="binding site" evidence="1">
    <location>
        <position position="469"/>
    </location>
    <ligand>
        <name>L-glutamine</name>
        <dbReference type="ChEBI" id="CHEBI:58359"/>
    </ligand>
</feature>
<sequence length="542" mass="60403">MARYVFITGGVVSSLGKGIAAAALAALLQARGYRVRIRKLDPYLNVDPGTMSPYQHGEVFVTDDGSETDLDLGHYERFTGRSANRHDNITTGRIYRNIIERERRGDYLGATVQVIPHVTDEIKNFITTGNEESDFVLCEIGGTVGDIEAMPFLEAIRQLHNELPRQSVVYMHLTLMPYISSAGELKTKPTQHSVKELQSVGIAPDILLVRADRPIPESERCKLSLFCNVRPSAVIQALDVSTIYDVPIAYHKEGLDSEILSAFGIDSAPEPKMDRWEDIAYRIHHPEGEVTIAIVGKYTGLKDAYKSLIEAVAHGGLANKVKVNIEWIEAEIFEKEDPALFLQKVHGILVPGAFGVRGSEGKIRAIQFARNHKIPFLGICFGMQLACIEAVRNLAGIENASSSEFCETKDSVVGLMTEWLKGDVFEKRTASGNLGGTMRLGAFIAQLKKDSHISKIYGTTSICERHRHRYEVNIHYKDILERFGFVFSGMSPDGVLPEAIEYNNHPWFIGVQYHPELKSRPFDPHPLFSSFIAATVEQSRLF</sequence>
<reference key="1">
    <citation type="submission" date="2006-12" db="EMBL/GenBank/DDBJ databases">
        <authorList>
            <person name="Hendrix L."/>
            <person name="Mohamoud Y."/>
            <person name="Radune D."/>
            <person name="Shvartsbeyn A."/>
            <person name="Daugherty S."/>
            <person name="Dodson R."/>
            <person name="Durkin A.S."/>
            <person name="Harkins D."/>
            <person name="Huot H."/>
            <person name="Kothari S.P."/>
            <person name="Madupu R."/>
            <person name="Li J."/>
            <person name="Nelson W.C."/>
            <person name="Shrivastava S."/>
            <person name="Giglio M.G."/>
            <person name="Haft D."/>
            <person name="Selengut J."/>
            <person name="Fraser-Ligget C."/>
            <person name="Seshadri R."/>
        </authorList>
    </citation>
    <scope>NUCLEOTIDE SEQUENCE [LARGE SCALE GENOMIC DNA]</scope>
    <source>
        <strain>ATCC 35685 / KC583 / Herrer 020/F12,63</strain>
    </source>
</reference>
<dbReference type="EC" id="6.3.4.2" evidence="1"/>
<dbReference type="EMBL" id="CP000524">
    <property type="protein sequence ID" value="ABM44882.1"/>
    <property type="molecule type" value="Genomic_DNA"/>
</dbReference>
<dbReference type="RefSeq" id="WP_005766653.1">
    <property type="nucleotide sequence ID" value="NC_008783.1"/>
</dbReference>
<dbReference type="SMR" id="A1US92"/>
<dbReference type="STRING" id="360095.BARBAKC583_0530"/>
<dbReference type="GeneID" id="4683896"/>
<dbReference type="KEGG" id="bbk:BARBAKC583_0530"/>
<dbReference type="PATRIC" id="fig|360095.6.peg.514"/>
<dbReference type="eggNOG" id="COG0504">
    <property type="taxonomic scope" value="Bacteria"/>
</dbReference>
<dbReference type="HOGENOM" id="CLU_011675_5_0_5"/>
<dbReference type="OrthoDB" id="9801107at2"/>
<dbReference type="UniPathway" id="UPA00159">
    <property type="reaction ID" value="UER00277"/>
</dbReference>
<dbReference type="Proteomes" id="UP000000643">
    <property type="component" value="Chromosome"/>
</dbReference>
<dbReference type="GO" id="GO:0005829">
    <property type="term" value="C:cytosol"/>
    <property type="evidence" value="ECO:0007669"/>
    <property type="project" value="TreeGrafter"/>
</dbReference>
<dbReference type="GO" id="GO:0005524">
    <property type="term" value="F:ATP binding"/>
    <property type="evidence" value="ECO:0007669"/>
    <property type="project" value="UniProtKB-KW"/>
</dbReference>
<dbReference type="GO" id="GO:0003883">
    <property type="term" value="F:CTP synthase activity"/>
    <property type="evidence" value="ECO:0007669"/>
    <property type="project" value="UniProtKB-UniRule"/>
</dbReference>
<dbReference type="GO" id="GO:0004359">
    <property type="term" value="F:glutaminase activity"/>
    <property type="evidence" value="ECO:0007669"/>
    <property type="project" value="RHEA"/>
</dbReference>
<dbReference type="GO" id="GO:0042802">
    <property type="term" value="F:identical protein binding"/>
    <property type="evidence" value="ECO:0007669"/>
    <property type="project" value="TreeGrafter"/>
</dbReference>
<dbReference type="GO" id="GO:0046872">
    <property type="term" value="F:metal ion binding"/>
    <property type="evidence" value="ECO:0007669"/>
    <property type="project" value="UniProtKB-KW"/>
</dbReference>
<dbReference type="GO" id="GO:0044210">
    <property type="term" value="P:'de novo' CTP biosynthetic process"/>
    <property type="evidence" value="ECO:0007669"/>
    <property type="project" value="UniProtKB-UniRule"/>
</dbReference>
<dbReference type="GO" id="GO:0019856">
    <property type="term" value="P:pyrimidine nucleobase biosynthetic process"/>
    <property type="evidence" value="ECO:0007669"/>
    <property type="project" value="TreeGrafter"/>
</dbReference>
<dbReference type="CDD" id="cd03113">
    <property type="entry name" value="CTPS_N"/>
    <property type="match status" value="1"/>
</dbReference>
<dbReference type="CDD" id="cd01746">
    <property type="entry name" value="GATase1_CTP_Synthase"/>
    <property type="match status" value="1"/>
</dbReference>
<dbReference type="FunFam" id="3.40.50.300:FF:000009">
    <property type="entry name" value="CTP synthase"/>
    <property type="match status" value="1"/>
</dbReference>
<dbReference type="FunFam" id="3.40.50.880:FF:000002">
    <property type="entry name" value="CTP synthase"/>
    <property type="match status" value="1"/>
</dbReference>
<dbReference type="Gene3D" id="3.40.50.880">
    <property type="match status" value="1"/>
</dbReference>
<dbReference type="Gene3D" id="3.40.50.300">
    <property type="entry name" value="P-loop containing nucleotide triphosphate hydrolases"/>
    <property type="match status" value="1"/>
</dbReference>
<dbReference type="HAMAP" id="MF_01227">
    <property type="entry name" value="PyrG"/>
    <property type="match status" value="1"/>
</dbReference>
<dbReference type="InterPro" id="IPR029062">
    <property type="entry name" value="Class_I_gatase-like"/>
</dbReference>
<dbReference type="InterPro" id="IPR004468">
    <property type="entry name" value="CTP_synthase"/>
</dbReference>
<dbReference type="InterPro" id="IPR017456">
    <property type="entry name" value="CTP_synthase_N"/>
</dbReference>
<dbReference type="InterPro" id="IPR017926">
    <property type="entry name" value="GATASE"/>
</dbReference>
<dbReference type="InterPro" id="IPR033828">
    <property type="entry name" value="GATase1_CTP_Synthase"/>
</dbReference>
<dbReference type="InterPro" id="IPR027417">
    <property type="entry name" value="P-loop_NTPase"/>
</dbReference>
<dbReference type="NCBIfam" id="NF003792">
    <property type="entry name" value="PRK05380.1"/>
    <property type="match status" value="1"/>
</dbReference>
<dbReference type="NCBIfam" id="TIGR00337">
    <property type="entry name" value="PyrG"/>
    <property type="match status" value="1"/>
</dbReference>
<dbReference type="PANTHER" id="PTHR11550">
    <property type="entry name" value="CTP SYNTHASE"/>
    <property type="match status" value="1"/>
</dbReference>
<dbReference type="PANTHER" id="PTHR11550:SF0">
    <property type="entry name" value="CTP SYNTHASE-RELATED"/>
    <property type="match status" value="1"/>
</dbReference>
<dbReference type="Pfam" id="PF06418">
    <property type="entry name" value="CTP_synth_N"/>
    <property type="match status" value="1"/>
</dbReference>
<dbReference type="Pfam" id="PF00117">
    <property type="entry name" value="GATase"/>
    <property type="match status" value="1"/>
</dbReference>
<dbReference type="SUPFAM" id="SSF52317">
    <property type="entry name" value="Class I glutamine amidotransferase-like"/>
    <property type="match status" value="1"/>
</dbReference>
<dbReference type="SUPFAM" id="SSF52540">
    <property type="entry name" value="P-loop containing nucleoside triphosphate hydrolases"/>
    <property type="match status" value="1"/>
</dbReference>
<dbReference type="PROSITE" id="PS51273">
    <property type="entry name" value="GATASE_TYPE_1"/>
    <property type="match status" value="1"/>
</dbReference>
<name>PYRG_BARBK</name>
<gene>
    <name evidence="1" type="primary">pyrG</name>
    <name type="ordered locus">BARBAKC583_0530</name>
</gene>
<comment type="function">
    <text evidence="1">Catalyzes the ATP-dependent amination of UTP to CTP with either L-glutamine or ammonia as the source of nitrogen. Regulates intracellular CTP levels through interactions with the four ribonucleotide triphosphates.</text>
</comment>
<comment type="catalytic activity">
    <reaction evidence="1">
        <text>UTP + L-glutamine + ATP + H2O = CTP + L-glutamate + ADP + phosphate + 2 H(+)</text>
        <dbReference type="Rhea" id="RHEA:26426"/>
        <dbReference type="ChEBI" id="CHEBI:15377"/>
        <dbReference type="ChEBI" id="CHEBI:15378"/>
        <dbReference type="ChEBI" id="CHEBI:29985"/>
        <dbReference type="ChEBI" id="CHEBI:30616"/>
        <dbReference type="ChEBI" id="CHEBI:37563"/>
        <dbReference type="ChEBI" id="CHEBI:43474"/>
        <dbReference type="ChEBI" id="CHEBI:46398"/>
        <dbReference type="ChEBI" id="CHEBI:58359"/>
        <dbReference type="ChEBI" id="CHEBI:456216"/>
        <dbReference type="EC" id="6.3.4.2"/>
    </reaction>
</comment>
<comment type="catalytic activity">
    <reaction evidence="1">
        <text>L-glutamine + H2O = L-glutamate + NH4(+)</text>
        <dbReference type="Rhea" id="RHEA:15889"/>
        <dbReference type="ChEBI" id="CHEBI:15377"/>
        <dbReference type="ChEBI" id="CHEBI:28938"/>
        <dbReference type="ChEBI" id="CHEBI:29985"/>
        <dbReference type="ChEBI" id="CHEBI:58359"/>
    </reaction>
</comment>
<comment type="catalytic activity">
    <reaction evidence="1">
        <text>UTP + NH4(+) + ATP = CTP + ADP + phosphate + 2 H(+)</text>
        <dbReference type="Rhea" id="RHEA:16597"/>
        <dbReference type="ChEBI" id="CHEBI:15378"/>
        <dbReference type="ChEBI" id="CHEBI:28938"/>
        <dbReference type="ChEBI" id="CHEBI:30616"/>
        <dbReference type="ChEBI" id="CHEBI:37563"/>
        <dbReference type="ChEBI" id="CHEBI:43474"/>
        <dbReference type="ChEBI" id="CHEBI:46398"/>
        <dbReference type="ChEBI" id="CHEBI:456216"/>
    </reaction>
</comment>
<comment type="activity regulation">
    <text evidence="1">Allosterically activated by GTP, when glutamine is the substrate; GTP has no effect on the reaction when ammonia is the substrate. The allosteric effector GTP functions by stabilizing the protein conformation that binds the tetrahedral intermediate(s) formed during glutamine hydrolysis. Inhibited by the product CTP, via allosteric rather than competitive inhibition.</text>
</comment>
<comment type="pathway">
    <text evidence="1">Pyrimidine metabolism; CTP biosynthesis via de novo pathway; CTP from UDP: step 2/2.</text>
</comment>
<comment type="subunit">
    <text evidence="1">Homotetramer.</text>
</comment>
<comment type="miscellaneous">
    <text evidence="1">CTPSs have evolved a hybrid strategy for distinguishing between UTP and CTP. The overlapping regions of the product feedback inhibitory and substrate sites recognize a common feature in both compounds, the triphosphate moiety. To differentiate isosteric substrate and product pyrimidine rings, an additional pocket far from the expected kinase/ligase catalytic site, specifically recognizes the cytosine and ribose portions of the product inhibitor.</text>
</comment>
<comment type="similarity">
    <text evidence="1">Belongs to the CTP synthase family.</text>
</comment>
<keyword id="KW-0067">ATP-binding</keyword>
<keyword id="KW-0315">Glutamine amidotransferase</keyword>
<keyword id="KW-0436">Ligase</keyword>
<keyword id="KW-0460">Magnesium</keyword>
<keyword id="KW-0479">Metal-binding</keyword>
<keyword id="KW-0547">Nucleotide-binding</keyword>
<keyword id="KW-0665">Pyrimidine biosynthesis</keyword>
<protein>
    <recommendedName>
        <fullName evidence="1">CTP synthase</fullName>
        <ecNumber evidence="1">6.3.4.2</ecNumber>
    </recommendedName>
    <alternativeName>
        <fullName evidence="1">Cytidine 5'-triphosphate synthase</fullName>
    </alternativeName>
    <alternativeName>
        <fullName evidence="1">Cytidine triphosphate synthetase</fullName>
        <shortName evidence="1">CTP synthetase</shortName>
        <shortName evidence="1">CTPS</shortName>
    </alternativeName>
    <alternativeName>
        <fullName evidence="1">UTP--ammonia ligase</fullName>
    </alternativeName>
</protein>
<evidence type="ECO:0000255" key="1">
    <source>
        <dbReference type="HAMAP-Rule" id="MF_01227"/>
    </source>
</evidence>
<accession>A1US92</accession>
<organism>
    <name type="scientific">Bartonella bacilliformis (strain ATCC 35685 / KC583 / Herrer 020/F12,63)</name>
    <dbReference type="NCBI Taxonomy" id="360095"/>
    <lineage>
        <taxon>Bacteria</taxon>
        <taxon>Pseudomonadati</taxon>
        <taxon>Pseudomonadota</taxon>
        <taxon>Alphaproteobacteria</taxon>
        <taxon>Hyphomicrobiales</taxon>
        <taxon>Bartonellaceae</taxon>
        <taxon>Bartonella</taxon>
    </lineage>
</organism>
<proteinExistence type="inferred from homology"/>